<feature type="chain" id="PRO_0000334378" description="Na(+)/H(+) antiporter NhaA 2">
    <location>
        <begin position="1"/>
        <end position="392"/>
    </location>
</feature>
<feature type="transmembrane region" description="Helical" evidence="1">
    <location>
        <begin position="20"/>
        <end position="40"/>
    </location>
</feature>
<feature type="transmembrane region" description="Helical" evidence="1">
    <location>
        <begin position="61"/>
        <end position="81"/>
    </location>
</feature>
<feature type="transmembrane region" description="Helical" evidence="1">
    <location>
        <begin position="99"/>
        <end position="119"/>
    </location>
</feature>
<feature type="transmembrane region" description="Helical" evidence="1">
    <location>
        <begin position="127"/>
        <end position="147"/>
    </location>
</feature>
<feature type="transmembrane region" description="Helical" evidence="1">
    <location>
        <begin position="158"/>
        <end position="178"/>
    </location>
</feature>
<feature type="transmembrane region" description="Helical" evidence="1">
    <location>
        <begin position="181"/>
        <end position="201"/>
    </location>
</feature>
<feature type="transmembrane region" description="Helical" evidence="1">
    <location>
        <begin position="209"/>
        <end position="229"/>
    </location>
</feature>
<feature type="transmembrane region" description="Helical" evidence="1">
    <location>
        <begin position="265"/>
        <end position="285"/>
    </location>
</feature>
<feature type="transmembrane region" description="Helical" evidence="1">
    <location>
        <begin position="298"/>
        <end position="318"/>
    </location>
</feature>
<feature type="transmembrane region" description="Helical" evidence="1">
    <location>
        <begin position="336"/>
        <end position="356"/>
    </location>
</feature>
<feature type="transmembrane region" description="Helical" evidence="1">
    <location>
        <begin position="365"/>
        <end position="385"/>
    </location>
</feature>
<accession>Q4ZNN2</accession>
<comment type="function">
    <text evidence="1">Na(+)/H(+) antiporter that extrudes sodium in exchange for external protons.</text>
</comment>
<comment type="catalytic activity">
    <reaction evidence="1">
        <text>Na(+)(in) + 2 H(+)(out) = Na(+)(out) + 2 H(+)(in)</text>
        <dbReference type="Rhea" id="RHEA:29251"/>
        <dbReference type="ChEBI" id="CHEBI:15378"/>
        <dbReference type="ChEBI" id="CHEBI:29101"/>
    </reaction>
    <physiologicalReaction direction="left-to-right" evidence="1">
        <dbReference type="Rhea" id="RHEA:29252"/>
    </physiologicalReaction>
</comment>
<comment type="subcellular location">
    <subcellularLocation>
        <location evidence="1">Cell inner membrane</location>
        <topology evidence="1">Multi-pass membrane protein</topology>
    </subcellularLocation>
</comment>
<comment type="similarity">
    <text evidence="1">Belongs to the NhaA Na(+)/H(+) (TC 2.A.33) antiporter family.</text>
</comment>
<protein>
    <recommendedName>
        <fullName evidence="1">Na(+)/H(+) antiporter NhaA 2</fullName>
    </recommendedName>
    <alternativeName>
        <fullName evidence="1">Sodium/proton antiporter NhaA 2</fullName>
    </alternativeName>
</protein>
<sequence>MHKPTPRTESPNALAFITRFFAAESAGGLVLMAAALAALIVANSPLGDSYFAALHAVFAGLSVSHWINDGLMAIFFMLVGLEIKREVLAGQLASWSQRALPGFAALGGMLVPALIYVAFNWGRPDTIGGWAIPAATDIAFALGVLSLLGKRVPLSLKIFLSALAILDDLGAVLIIALFYTSDLSIPMLLAALGSIAMLVALNRLGVKKLLPYLIVGALLWFFMLQSGIHATLAGVALALCIPLGKPDEEARSPLLHLEEKLHPWVAFAVVPIFGFANAGVSLSGITADTLVDPVPLGVALGLLVGKQVGIFAMAALAIRAGLARLPDGSNWGQLYGVAALCGIGFTMSLFIGALAFPGAPELVDEVKVGVLIGSVLSAVLGVVVLRRFAQRG</sequence>
<reference key="1">
    <citation type="journal article" date="2005" name="Proc. Natl. Acad. Sci. U.S.A.">
        <title>Comparison of the complete genome sequences of Pseudomonas syringae pv. syringae B728a and pv. tomato DC3000.</title>
        <authorList>
            <person name="Feil H."/>
            <person name="Feil W.S."/>
            <person name="Chain P."/>
            <person name="Larimer F."/>
            <person name="Dibartolo G."/>
            <person name="Copeland A."/>
            <person name="Lykidis A."/>
            <person name="Trong S."/>
            <person name="Nolan M."/>
            <person name="Goltsman E."/>
            <person name="Thiel J."/>
            <person name="Malfatti S."/>
            <person name="Loper J.E."/>
            <person name="Lapidus A."/>
            <person name="Detter J.C."/>
            <person name="Land M."/>
            <person name="Richardson P.M."/>
            <person name="Kyrpides N.C."/>
            <person name="Ivanova N."/>
            <person name="Lindow S.E."/>
        </authorList>
    </citation>
    <scope>NUCLEOTIDE SEQUENCE [LARGE SCALE GENOMIC DNA]</scope>
    <source>
        <strain>B728a</strain>
    </source>
</reference>
<name>NHAA2_PSEU2</name>
<proteinExistence type="inferred from homology"/>
<dbReference type="EMBL" id="CP000075">
    <property type="protein sequence ID" value="AAY39240.1"/>
    <property type="molecule type" value="Genomic_DNA"/>
</dbReference>
<dbReference type="RefSeq" id="YP_237278.1">
    <property type="nucleotide sequence ID" value="NC_007005.1"/>
</dbReference>
<dbReference type="SMR" id="Q4ZNN2"/>
<dbReference type="STRING" id="205918.Psyr_4210"/>
<dbReference type="KEGG" id="psb:Psyr_4210"/>
<dbReference type="PATRIC" id="fig|205918.7.peg.4337"/>
<dbReference type="eggNOG" id="COG3004">
    <property type="taxonomic scope" value="Bacteria"/>
</dbReference>
<dbReference type="HOGENOM" id="CLU_015803_1_0_6"/>
<dbReference type="OrthoDB" id="9808135at2"/>
<dbReference type="Proteomes" id="UP000000426">
    <property type="component" value="Chromosome"/>
</dbReference>
<dbReference type="GO" id="GO:0005886">
    <property type="term" value="C:plasma membrane"/>
    <property type="evidence" value="ECO:0007669"/>
    <property type="project" value="UniProtKB-SubCell"/>
</dbReference>
<dbReference type="GO" id="GO:0015385">
    <property type="term" value="F:sodium:proton antiporter activity"/>
    <property type="evidence" value="ECO:0007669"/>
    <property type="project" value="TreeGrafter"/>
</dbReference>
<dbReference type="GO" id="GO:0006885">
    <property type="term" value="P:regulation of pH"/>
    <property type="evidence" value="ECO:0007669"/>
    <property type="project" value="InterPro"/>
</dbReference>
<dbReference type="Gene3D" id="1.20.1530.10">
    <property type="entry name" value="Na+/H+ antiporter like domain"/>
    <property type="match status" value="1"/>
</dbReference>
<dbReference type="HAMAP" id="MF_01844">
    <property type="entry name" value="NhaA"/>
    <property type="match status" value="1"/>
</dbReference>
<dbReference type="InterPro" id="IPR023171">
    <property type="entry name" value="Na/H_antiporter_dom_sf"/>
</dbReference>
<dbReference type="InterPro" id="IPR004670">
    <property type="entry name" value="NhaA"/>
</dbReference>
<dbReference type="NCBIfam" id="TIGR00773">
    <property type="entry name" value="NhaA"/>
    <property type="match status" value="1"/>
</dbReference>
<dbReference type="NCBIfam" id="NF007111">
    <property type="entry name" value="PRK09560.1"/>
    <property type="match status" value="1"/>
</dbReference>
<dbReference type="NCBIfam" id="NF007112">
    <property type="entry name" value="PRK09561.1"/>
    <property type="match status" value="1"/>
</dbReference>
<dbReference type="PANTHER" id="PTHR30341:SF0">
    <property type="entry name" value="NA(+)_H(+) ANTIPORTER NHAA"/>
    <property type="match status" value="1"/>
</dbReference>
<dbReference type="PANTHER" id="PTHR30341">
    <property type="entry name" value="SODIUM ION/PROTON ANTIPORTER NHAA-RELATED"/>
    <property type="match status" value="1"/>
</dbReference>
<dbReference type="Pfam" id="PF06965">
    <property type="entry name" value="Na_H_antiport_1"/>
    <property type="match status" value="1"/>
</dbReference>
<evidence type="ECO:0000255" key="1">
    <source>
        <dbReference type="HAMAP-Rule" id="MF_01844"/>
    </source>
</evidence>
<organism>
    <name type="scientific">Pseudomonas syringae pv. syringae (strain B728a)</name>
    <dbReference type="NCBI Taxonomy" id="205918"/>
    <lineage>
        <taxon>Bacteria</taxon>
        <taxon>Pseudomonadati</taxon>
        <taxon>Pseudomonadota</taxon>
        <taxon>Gammaproteobacteria</taxon>
        <taxon>Pseudomonadales</taxon>
        <taxon>Pseudomonadaceae</taxon>
        <taxon>Pseudomonas</taxon>
        <taxon>Pseudomonas syringae</taxon>
    </lineage>
</organism>
<gene>
    <name evidence="1" type="primary">nhaA2</name>
    <name type="ordered locus">Psyr_4210</name>
</gene>
<keyword id="KW-0050">Antiport</keyword>
<keyword id="KW-0997">Cell inner membrane</keyword>
<keyword id="KW-1003">Cell membrane</keyword>
<keyword id="KW-0406">Ion transport</keyword>
<keyword id="KW-0472">Membrane</keyword>
<keyword id="KW-0915">Sodium</keyword>
<keyword id="KW-0739">Sodium transport</keyword>
<keyword id="KW-0812">Transmembrane</keyword>
<keyword id="KW-1133">Transmembrane helix</keyword>
<keyword id="KW-0813">Transport</keyword>